<accession>A5D7N3</accession>
<sequence length="192" mass="21479">MAAWGRRRLGPGSGGGGARERVSLSATDCYIVHEIYNGENAQDQFEYELEQALEAQYKYIVIEPTRIGDETARWITVGNCLHKTTVLAGTACLFTPLALPLDYSHYISLPAGVLSLACCTLYGISWQFDPCCKYQVEYDAYRLSRLPLHTLTSSTPVVLVRKDDLHRKRLHNTIALAALVYCVKKIYELCAV</sequence>
<keyword id="KW-0472">Membrane</keyword>
<keyword id="KW-0496">Mitochondrion</keyword>
<keyword id="KW-0999">Mitochondrion inner membrane</keyword>
<keyword id="KW-1185">Reference proteome</keyword>
<keyword id="KW-0812">Transmembrane</keyword>
<keyword id="KW-1133">Transmembrane helix</keyword>
<feature type="chain" id="PRO_0000367036" description="Transmembrane protein 11, mitochondrial">
    <location>
        <begin position="1"/>
        <end position="192"/>
    </location>
</feature>
<feature type="transmembrane region" description="Helical" evidence="2">
    <location>
        <begin position="84"/>
        <end position="100"/>
    </location>
</feature>
<feature type="transmembrane region" description="Helical" evidence="2">
    <location>
        <begin position="107"/>
        <end position="124"/>
    </location>
</feature>
<feature type="region of interest" description="Disordered" evidence="3">
    <location>
        <begin position="1"/>
        <end position="20"/>
    </location>
</feature>
<gene>
    <name type="primary">TMEM11</name>
</gene>
<name>TMM11_BOVIN</name>
<organism>
    <name type="scientific">Bos taurus</name>
    <name type="common">Bovine</name>
    <dbReference type="NCBI Taxonomy" id="9913"/>
    <lineage>
        <taxon>Eukaryota</taxon>
        <taxon>Metazoa</taxon>
        <taxon>Chordata</taxon>
        <taxon>Craniata</taxon>
        <taxon>Vertebrata</taxon>
        <taxon>Euteleostomi</taxon>
        <taxon>Mammalia</taxon>
        <taxon>Eutheria</taxon>
        <taxon>Laurasiatheria</taxon>
        <taxon>Artiodactyla</taxon>
        <taxon>Ruminantia</taxon>
        <taxon>Pecora</taxon>
        <taxon>Bovidae</taxon>
        <taxon>Bovinae</taxon>
        <taxon>Bos</taxon>
    </lineage>
</organism>
<proteinExistence type="evidence at transcript level"/>
<comment type="function">
    <text evidence="1">Plays a role in mitochondrial morphogenesis.</text>
</comment>
<comment type="subunit">
    <text evidence="1">Associates with the mitochondrial contact site and cristae organizing system (MICOS) complex, composed of at least MICOS10/MIC10, CHCHD3/MIC19, CHCHD6/MIC25, APOOL/MIC27, IMMT/MIC60, APOO/MIC23/MIC26 and QIL1/MIC13. This complex was also known under the names MINOS or MitOS complex. The MICOS complex associates with mitochondrial outer membrane proteins SAMM50, MTX1, MTX2 and DNAJC11, mitochondrial inner membrane protein TMEM11 and with HSPA9. Interacts with IMMT/MIC60.</text>
</comment>
<comment type="subcellular location">
    <subcellularLocation>
        <location evidence="1">Mitochondrion inner membrane</location>
        <topology evidence="1">Multi-pass membrane protein</topology>
    </subcellularLocation>
</comment>
<comment type="similarity">
    <text evidence="4">Belongs to the TMEM11 family.</text>
</comment>
<reference key="1">
    <citation type="submission" date="2007-04" db="EMBL/GenBank/DDBJ databases">
        <authorList>
            <consortium name="NIH - Mammalian Gene Collection (MGC) project"/>
        </authorList>
    </citation>
    <scope>NUCLEOTIDE SEQUENCE [LARGE SCALE MRNA]</scope>
    <source>
        <strain>Hereford</strain>
        <tissue>Fetal pons</tissue>
    </source>
</reference>
<evidence type="ECO:0000250" key="1">
    <source>
        <dbReference type="UniProtKB" id="P17152"/>
    </source>
</evidence>
<evidence type="ECO:0000255" key="2"/>
<evidence type="ECO:0000256" key="3">
    <source>
        <dbReference type="SAM" id="MobiDB-lite"/>
    </source>
</evidence>
<evidence type="ECO:0000305" key="4"/>
<protein>
    <recommendedName>
        <fullName>Transmembrane protein 11, mitochondrial</fullName>
    </recommendedName>
</protein>
<dbReference type="EMBL" id="BC140623">
    <property type="protein sequence ID" value="AAI40624.1"/>
    <property type="molecule type" value="mRNA"/>
</dbReference>
<dbReference type="RefSeq" id="NP_001091467.1">
    <property type="nucleotide sequence ID" value="NM_001097998.2"/>
</dbReference>
<dbReference type="FunCoup" id="A5D7N3">
    <property type="interactions" value="1830"/>
</dbReference>
<dbReference type="STRING" id="9913.ENSBTAP00000074000"/>
<dbReference type="PaxDb" id="9913-ENSBTAP00000013971"/>
<dbReference type="Ensembl" id="ENSBTAT00000013971.5">
    <property type="protein sequence ID" value="ENSBTAP00000013971.3"/>
    <property type="gene ID" value="ENSBTAG00000010566.5"/>
</dbReference>
<dbReference type="GeneID" id="508598"/>
<dbReference type="KEGG" id="bta:508598"/>
<dbReference type="CTD" id="8834"/>
<dbReference type="VEuPathDB" id="HostDB:ENSBTAG00000010566"/>
<dbReference type="VGNC" id="VGNC:35950">
    <property type="gene designation" value="TMEM11"/>
</dbReference>
<dbReference type="eggNOG" id="ENOG502QUAI">
    <property type="taxonomic scope" value="Eukaryota"/>
</dbReference>
<dbReference type="GeneTree" id="ENSGT00390000006617"/>
<dbReference type="HOGENOM" id="CLU_095460_0_0_1"/>
<dbReference type="InParanoid" id="A5D7N3"/>
<dbReference type="OMA" id="IGNCLHK"/>
<dbReference type="OrthoDB" id="9970856at2759"/>
<dbReference type="TreeFam" id="TF324685"/>
<dbReference type="Proteomes" id="UP000009136">
    <property type="component" value="Chromosome 19"/>
</dbReference>
<dbReference type="Bgee" id="ENSBTAG00000010566">
    <property type="expression patterns" value="Expressed in laryngeal cartilage and 106 other cell types or tissues"/>
</dbReference>
<dbReference type="GO" id="GO:0005743">
    <property type="term" value="C:mitochondrial inner membrane"/>
    <property type="evidence" value="ECO:0000250"/>
    <property type="project" value="UniProtKB"/>
</dbReference>
<dbReference type="GO" id="GO:0007007">
    <property type="term" value="P:inner mitochondrial membrane organization"/>
    <property type="evidence" value="ECO:0000318"/>
    <property type="project" value="GO_Central"/>
</dbReference>
<dbReference type="GO" id="GO:0007005">
    <property type="term" value="P:mitochondrion organization"/>
    <property type="evidence" value="ECO:0000250"/>
    <property type="project" value="UniProtKB"/>
</dbReference>
<dbReference type="InterPro" id="IPR026120">
    <property type="entry name" value="TMEM11"/>
</dbReference>
<dbReference type="PANTHER" id="PTHR15099">
    <property type="entry name" value="PROTEIN PM1"/>
    <property type="match status" value="1"/>
</dbReference>
<dbReference type="PANTHER" id="PTHR15099:SF2">
    <property type="entry name" value="TRANSMEMBRANE PROTEIN 11, MITOCHONDRIAL"/>
    <property type="match status" value="1"/>
</dbReference>
<dbReference type="Pfam" id="PF14972">
    <property type="entry name" value="Mito_morph_reg"/>
    <property type="match status" value="1"/>
</dbReference>